<evidence type="ECO:0000255" key="1">
    <source>
        <dbReference type="HAMAP-Rule" id="MF_00189"/>
    </source>
</evidence>
<reference key="1">
    <citation type="journal article" date="2008" name="PLoS ONE">
        <title>A recalibrated molecular clock and independent origins for the cholera pandemic clones.</title>
        <authorList>
            <person name="Feng L."/>
            <person name="Reeves P.R."/>
            <person name="Lan R."/>
            <person name="Ren Y."/>
            <person name="Gao C."/>
            <person name="Zhou Z."/>
            <person name="Ren Y."/>
            <person name="Cheng J."/>
            <person name="Wang W."/>
            <person name="Wang J."/>
            <person name="Qian W."/>
            <person name="Li D."/>
            <person name="Wang L."/>
        </authorList>
    </citation>
    <scope>NUCLEOTIDE SEQUENCE [LARGE SCALE GENOMIC DNA]</scope>
    <source>
        <strain>M66-2</strain>
    </source>
</reference>
<dbReference type="EMBL" id="CP001233">
    <property type="protein sequence ID" value="ACP05949.1"/>
    <property type="molecule type" value="Genomic_DNA"/>
</dbReference>
<dbReference type="RefSeq" id="WP_000811598.1">
    <property type="nucleotide sequence ID" value="NC_012578.1"/>
</dbReference>
<dbReference type="KEGG" id="vcm:VCM66_1640"/>
<dbReference type="HOGENOM" id="CLU_089554_2_0_6"/>
<dbReference type="Proteomes" id="UP000001217">
    <property type="component" value="Chromosome I"/>
</dbReference>
<dbReference type="GO" id="GO:0005886">
    <property type="term" value="C:plasma membrane"/>
    <property type="evidence" value="ECO:0007669"/>
    <property type="project" value="UniProtKB-SubCell"/>
</dbReference>
<dbReference type="HAMAP" id="MF_00189">
    <property type="entry name" value="YciB"/>
    <property type="match status" value="1"/>
</dbReference>
<dbReference type="InterPro" id="IPR006008">
    <property type="entry name" value="YciB"/>
</dbReference>
<dbReference type="NCBIfam" id="TIGR00997">
    <property type="entry name" value="ispZ"/>
    <property type="match status" value="1"/>
</dbReference>
<dbReference type="NCBIfam" id="NF001324">
    <property type="entry name" value="PRK00259.1-2"/>
    <property type="match status" value="1"/>
</dbReference>
<dbReference type="NCBIfam" id="NF001325">
    <property type="entry name" value="PRK00259.1-3"/>
    <property type="match status" value="1"/>
</dbReference>
<dbReference type="PANTHER" id="PTHR36917:SF1">
    <property type="entry name" value="INNER MEMBRANE-SPANNING PROTEIN YCIB"/>
    <property type="match status" value="1"/>
</dbReference>
<dbReference type="PANTHER" id="PTHR36917">
    <property type="entry name" value="INTRACELLULAR SEPTATION PROTEIN A-RELATED"/>
    <property type="match status" value="1"/>
</dbReference>
<dbReference type="Pfam" id="PF04279">
    <property type="entry name" value="IspA"/>
    <property type="match status" value="1"/>
</dbReference>
<accession>C3LN23</accession>
<organism>
    <name type="scientific">Vibrio cholerae serotype O1 (strain M66-2)</name>
    <dbReference type="NCBI Taxonomy" id="579112"/>
    <lineage>
        <taxon>Bacteria</taxon>
        <taxon>Pseudomonadati</taxon>
        <taxon>Pseudomonadota</taxon>
        <taxon>Gammaproteobacteria</taxon>
        <taxon>Vibrionales</taxon>
        <taxon>Vibrionaceae</taxon>
        <taxon>Vibrio</taxon>
    </lineage>
</organism>
<feature type="chain" id="PRO_1000124262" description="Inner membrane-spanning protein YciB">
    <location>
        <begin position="1"/>
        <end position="181"/>
    </location>
</feature>
<feature type="transmembrane region" description="Helical" evidence="1">
    <location>
        <begin position="10"/>
        <end position="30"/>
    </location>
</feature>
<feature type="transmembrane region" description="Helical" evidence="1">
    <location>
        <begin position="50"/>
        <end position="70"/>
    </location>
</feature>
<feature type="transmembrane region" description="Helical" evidence="1">
    <location>
        <begin position="80"/>
        <end position="100"/>
    </location>
</feature>
<feature type="transmembrane region" description="Helical" evidence="1">
    <location>
        <begin position="120"/>
        <end position="140"/>
    </location>
</feature>
<feature type="transmembrane region" description="Helical" evidence="1">
    <location>
        <begin position="148"/>
        <end position="168"/>
    </location>
</feature>
<gene>
    <name evidence="1" type="primary">yciB</name>
    <name type="ordered locus">VCM66_1640</name>
</gene>
<comment type="function">
    <text evidence="1">Plays a role in cell envelope biogenesis, maintenance of cell envelope integrity and membrane homeostasis.</text>
</comment>
<comment type="subcellular location">
    <subcellularLocation>
        <location evidence="1">Cell inner membrane</location>
        <topology evidence="1">Multi-pass membrane protein</topology>
    </subcellularLocation>
</comment>
<comment type="similarity">
    <text evidence="1">Belongs to the YciB family.</text>
</comment>
<name>YCIB_VIBCM</name>
<proteinExistence type="inferred from homology"/>
<protein>
    <recommendedName>
        <fullName evidence="1">Inner membrane-spanning protein YciB</fullName>
    </recommendedName>
</protein>
<keyword id="KW-0997">Cell inner membrane</keyword>
<keyword id="KW-1003">Cell membrane</keyword>
<keyword id="KW-0472">Membrane</keyword>
<keyword id="KW-0812">Transmembrane</keyword>
<keyword id="KW-1133">Transmembrane helix</keyword>
<sequence length="181" mass="20486">MKQLLDFIPLIIFFALYKFYDIYVATGALIAATTVQVIVTYAMYKKVEKMQLITFVMVALFGGMTLALHDDNFIKWKVTIVYVVFALGLTISQIMGKPAIKGMLGKELTLPDAVWSTINWAWVMFFSGCAALNLYVAYHLPLDVWVNFKVFGLLAATLVFTLLTGGYIYKHLPHEPKQKNQ</sequence>